<comment type="function">
    <text evidence="1">Cecropins have lytic and antibacterial activity against several Gram-positive and Gram-negative bacteria.</text>
</comment>
<comment type="subcellular location">
    <subcellularLocation>
        <location>Secreted</location>
    </subcellularLocation>
</comment>
<comment type="mass spectrometry">
    <molecule>Cecropin-B</molecule>
</comment>
<comment type="similarity">
    <text evidence="3">Belongs to the cecropin family.</text>
</comment>
<protein>
    <recommendedName>
        <fullName>Cecropin-B type 2</fullName>
        <shortName>Cecropin-B2</shortName>
    </recommendedName>
    <component>
        <recommendedName>
            <fullName>Cecropin-B</fullName>
        </recommendedName>
        <alternativeName>
            <fullName>AalCecB</fullName>
        </alternativeName>
    </component>
    <component>
        <recommendedName>
            <fullName>Cecropin-B amidated isoform</fullName>
        </recommendedName>
    </component>
</protein>
<feature type="signal peptide" evidence="2">
    <location>
        <begin position="1"/>
        <end position="24"/>
    </location>
</feature>
<feature type="chain" id="PRO_0000004816" description="Cecropin-B">
    <location>
        <begin position="25"/>
        <end position="59"/>
    </location>
</feature>
<feature type="chain" id="PRO_0000004817" description="Cecropin-B amidated isoform">
    <location>
        <begin position="25"/>
        <end position="58"/>
    </location>
</feature>
<feature type="modified residue" description="Isoleucine amide" evidence="2">
    <location>
        <position position="58"/>
    </location>
</feature>
<dbReference type="EMBL" id="AF394746">
    <property type="protein sequence ID" value="AAK81851.1"/>
    <property type="molecule type" value="Genomic_DNA"/>
</dbReference>
<dbReference type="SMR" id="Q963A9"/>
<dbReference type="VEuPathDB" id="VectorBase:AALFPA_043934"/>
<dbReference type="Proteomes" id="UP000069940">
    <property type="component" value="Unassembled WGS sequence"/>
</dbReference>
<dbReference type="GO" id="GO:0005615">
    <property type="term" value="C:extracellular space"/>
    <property type="evidence" value="ECO:0007669"/>
    <property type="project" value="TreeGrafter"/>
</dbReference>
<dbReference type="GO" id="GO:0019731">
    <property type="term" value="P:antibacterial humoral response"/>
    <property type="evidence" value="ECO:0007669"/>
    <property type="project" value="InterPro"/>
</dbReference>
<dbReference type="GO" id="GO:0050829">
    <property type="term" value="P:defense response to Gram-negative bacterium"/>
    <property type="evidence" value="ECO:0007669"/>
    <property type="project" value="UniProtKB-ARBA"/>
</dbReference>
<dbReference type="GO" id="GO:0050830">
    <property type="term" value="P:defense response to Gram-positive bacterium"/>
    <property type="evidence" value="ECO:0007669"/>
    <property type="project" value="TreeGrafter"/>
</dbReference>
<dbReference type="GO" id="GO:0045087">
    <property type="term" value="P:innate immune response"/>
    <property type="evidence" value="ECO:0007669"/>
    <property type="project" value="UniProtKB-KW"/>
</dbReference>
<dbReference type="InterPro" id="IPR000875">
    <property type="entry name" value="Cecropin"/>
</dbReference>
<dbReference type="InterPro" id="IPR020400">
    <property type="entry name" value="Cecropin_insect"/>
</dbReference>
<dbReference type="PANTHER" id="PTHR38329">
    <property type="entry name" value="CECROPIN-A1-RELATED"/>
    <property type="match status" value="1"/>
</dbReference>
<dbReference type="PANTHER" id="PTHR38329:SF1">
    <property type="entry name" value="CECROPIN-A1-RELATED"/>
    <property type="match status" value="1"/>
</dbReference>
<dbReference type="Pfam" id="PF00272">
    <property type="entry name" value="Cecropin"/>
    <property type="match status" value="1"/>
</dbReference>
<name>CECB2_AEDAL</name>
<proteinExistence type="evidence at protein level"/>
<evidence type="ECO:0000250" key="1"/>
<evidence type="ECO:0000269" key="2">
    <source>
    </source>
</evidence>
<evidence type="ECO:0000305" key="3"/>
<sequence>MNFSKLFALVLLIGLVLLTGQTEAGGLKKLGKKLEGVGKRVFKASEKALPVLTGYKAIGK</sequence>
<accession>Q963A9</accession>
<reference key="1">
    <citation type="submission" date="2001-06" db="EMBL/GenBank/DDBJ databases">
        <title>Characterization of genomic DNA encoding mosquito cecropins.</title>
        <authorList>
            <person name="Sun D."/>
            <person name="Fallon A.M."/>
        </authorList>
    </citation>
    <scope>NUCLEOTIDE SEQUENCE [GENOMIC DNA]</scope>
</reference>
<reference key="2">
    <citation type="journal article" date="1999" name="FEBS Lett.">
        <title>Cloning and expression of three cecropin cDNAs from a mosquito cell line.</title>
        <authorList>
            <person name="Sun D."/>
            <person name="Eccleston E.D."/>
            <person name="Fallon A.M."/>
        </authorList>
    </citation>
    <scope>PROTEIN SEQUENCE OF 25-59</scope>
    <scope>MASS SPECTROMETRY</scope>
    <scope>AMIDATION AT ILE-58</scope>
</reference>
<organism>
    <name type="scientific">Aedes albopictus</name>
    <name type="common">Asian tiger mosquito</name>
    <name type="synonym">Stegomyia albopicta</name>
    <dbReference type="NCBI Taxonomy" id="7160"/>
    <lineage>
        <taxon>Eukaryota</taxon>
        <taxon>Metazoa</taxon>
        <taxon>Ecdysozoa</taxon>
        <taxon>Arthropoda</taxon>
        <taxon>Hexapoda</taxon>
        <taxon>Insecta</taxon>
        <taxon>Pterygota</taxon>
        <taxon>Neoptera</taxon>
        <taxon>Endopterygota</taxon>
        <taxon>Diptera</taxon>
        <taxon>Nematocera</taxon>
        <taxon>Culicoidea</taxon>
        <taxon>Culicidae</taxon>
        <taxon>Culicinae</taxon>
        <taxon>Aedini</taxon>
        <taxon>Aedes</taxon>
        <taxon>Stegomyia</taxon>
    </lineage>
</organism>
<gene>
    <name type="primary">CECB2</name>
</gene>
<keyword id="KW-0027">Amidation</keyword>
<keyword id="KW-0044">Antibiotic</keyword>
<keyword id="KW-0929">Antimicrobial</keyword>
<keyword id="KW-0903">Direct protein sequencing</keyword>
<keyword id="KW-0391">Immunity</keyword>
<keyword id="KW-0399">Innate immunity</keyword>
<keyword id="KW-0964">Secreted</keyword>
<keyword id="KW-0732">Signal</keyword>